<keyword id="KW-0066">ATP synthesis</keyword>
<keyword id="KW-1003">Cell membrane</keyword>
<keyword id="KW-0139">CF(1)</keyword>
<keyword id="KW-0375">Hydrogen ion transport</keyword>
<keyword id="KW-0406">Ion transport</keyword>
<keyword id="KW-0472">Membrane</keyword>
<keyword id="KW-0813">Transport</keyword>
<accession>B7GTZ2</accession>
<accession>E8MP83</accession>
<reference key="1">
    <citation type="journal article" date="2008" name="Proc. Natl. Acad. Sci. U.S.A.">
        <title>The genome sequence of Bifidobacterium longum subsp. infantis reveals adaptations for milk utilization within the infant microbiome.</title>
        <authorList>
            <person name="Sela D.A."/>
            <person name="Chapman J."/>
            <person name="Adeuya A."/>
            <person name="Kim J.H."/>
            <person name="Chen F."/>
            <person name="Whitehead T.R."/>
            <person name="Lapidus A."/>
            <person name="Rokhsar D.S."/>
            <person name="Lebrilla C.B."/>
            <person name="German J.B."/>
            <person name="Price N.P."/>
            <person name="Richardson P.M."/>
            <person name="Mills D.A."/>
        </authorList>
    </citation>
    <scope>NUCLEOTIDE SEQUENCE [LARGE SCALE GENOMIC DNA]</scope>
    <source>
        <strain>ATCC 15697 / DSM 20088 / JCM 1222 / NCTC 11817 / S12</strain>
    </source>
</reference>
<reference key="2">
    <citation type="journal article" date="2011" name="Nature">
        <title>Bifidobacteria can protect from enteropathogenic infection through production of acetate.</title>
        <authorList>
            <person name="Fukuda S."/>
            <person name="Toh H."/>
            <person name="Hase K."/>
            <person name="Oshima K."/>
            <person name="Nakanishi Y."/>
            <person name="Yoshimura K."/>
            <person name="Tobe T."/>
            <person name="Clarke J.M."/>
            <person name="Topping D.L."/>
            <person name="Suzuki T."/>
            <person name="Taylor T.D."/>
            <person name="Itoh K."/>
            <person name="Kikuchi J."/>
            <person name="Morita H."/>
            <person name="Hattori M."/>
            <person name="Ohno H."/>
        </authorList>
    </citation>
    <scope>NUCLEOTIDE SEQUENCE [LARGE SCALE GENOMIC DNA]</scope>
    <source>
        <strain>ATCC 15697 / DSM 20088 / JCM 1222 / NCTC 11817 / S12</strain>
    </source>
</reference>
<dbReference type="EMBL" id="CP001095">
    <property type="protein sequence ID" value="ACJ51433.1"/>
    <property type="molecule type" value="Genomic_DNA"/>
</dbReference>
<dbReference type="EMBL" id="AP010889">
    <property type="protein sequence ID" value="BAJ67907.1"/>
    <property type="molecule type" value="Genomic_DNA"/>
</dbReference>
<dbReference type="RefSeq" id="WP_012576743.1">
    <property type="nucleotide sequence ID" value="NZ_JDTT01000024.1"/>
</dbReference>
<dbReference type="SMR" id="B7GTZ2"/>
<dbReference type="KEGG" id="bln:Blon_0308"/>
<dbReference type="KEGG" id="blon:BLIJ_0313"/>
<dbReference type="PATRIC" id="fig|391904.8.peg.316"/>
<dbReference type="HOGENOM" id="CLU_050669_0_0_11"/>
<dbReference type="Proteomes" id="UP000001360">
    <property type="component" value="Chromosome"/>
</dbReference>
<dbReference type="GO" id="GO:0005886">
    <property type="term" value="C:plasma membrane"/>
    <property type="evidence" value="ECO:0007669"/>
    <property type="project" value="UniProtKB-SubCell"/>
</dbReference>
<dbReference type="GO" id="GO:0045259">
    <property type="term" value="C:proton-transporting ATP synthase complex"/>
    <property type="evidence" value="ECO:0007669"/>
    <property type="project" value="UniProtKB-KW"/>
</dbReference>
<dbReference type="GO" id="GO:0005524">
    <property type="term" value="F:ATP binding"/>
    <property type="evidence" value="ECO:0007669"/>
    <property type="project" value="UniProtKB-UniRule"/>
</dbReference>
<dbReference type="GO" id="GO:0046933">
    <property type="term" value="F:proton-transporting ATP synthase activity, rotational mechanism"/>
    <property type="evidence" value="ECO:0007669"/>
    <property type="project" value="UniProtKB-UniRule"/>
</dbReference>
<dbReference type="GO" id="GO:0042777">
    <property type="term" value="P:proton motive force-driven plasma membrane ATP synthesis"/>
    <property type="evidence" value="ECO:0007669"/>
    <property type="project" value="UniProtKB-UniRule"/>
</dbReference>
<dbReference type="CDD" id="cd12151">
    <property type="entry name" value="F1-ATPase_gamma"/>
    <property type="match status" value="1"/>
</dbReference>
<dbReference type="Gene3D" id="3.40.1380.10">
    <property type="match status" value="1"/>
</dbReference>
<dbReference type="Gene3D" id="1.10.287.80">
    <property type="entry name" value="ATP synthase, gamma subunit, helix hairpin domain"/>
    <property type="match status" value="2"/>
</dbReference>
<dbReference type="HAMAP" id="MF_00815">
    <property type="entry name" value="ATP_synth_gamma_bact"/>
    <property type="match status" value="1"/>
</dbReference>
<dbReference type="InterPro" id="IPR035968">
    <property type="entry name" value="ATP_synth_F1_ATPase_gsu"/>
</dbReference>
<dbReference type="InterPro" id="IPR000131">
    <property type="entry name" value="ATP_synth_F1_gsu"/>
</dbReference>
<dbReference type="NCBIfam" id="TIGR01146">
    <property type="entry name" value="ATPsyn_F1gamma"/>
    <property type="match status" value="1"/>
</dbReference>
<dbReference type="NCBIfam" id="NF004145">
    <property type="entry name" value="PRK05621.1-2"/>
    <property type="match status" value="1"/>
</dbReference>
<dbReference type="PANTHER" id="PTHR11693">
    <property type="entry name" value="ATP SYNTHASE GAMMA CHAIN"/>
    <property type="match status" value="1"/>
</dbReference>
<dbReference type="PANTHER" id="PTHR11693:SF22">
    <property type="entry name" value="ATP SYNTHASE SUBUNIT GAMMA, MITOCHONDRIAL"/>
    <property type="match status" value="1"/>
</dbReference>
<dbReference type="Pfam" id="PF00231">
    <property type="entry name" value="ATP-synt"/>
    <property type="match status" value="1"/>
</dbReference>
<dbReference type="PRINTS" id="PR00126">
    <property type="entry name" value="ATPASEGAMMA"/>
</dbReference>
<dbReference type="SUPFAM" id="SSF52943">
    <property type="entry name" value="ATP synthase (F1-ATPase), gamma subunit"/>
    <property type="match status" value="1"/>
</dbReference>
<name>ATPG_BIFLS</name>
<proteinExistence type="inferred from homology"/>
<protein>
    <recommendedName>
        <fullName evidence="1">ATP synthase gamma chain</fullName>
    </recommendedName>
    <alternativeName>
        <fullName evidence="1">ATP synthase F1 sector gamma subunit</fullName>
    </alternativeName>
    <alternativeName>
        <fullName evidence="1">F-ATPase gamma subunit</fullName>
    </alternativeName>
</protein>
<comment type="function">
    <text evidence="1">Produces ATP from ADP in the presence of a proton gradient across the membrane. The gamma chain is believed to be important in regulating ATPase activity and the flow of protons through the CF(0) complex.</text>
</comment>
<comment type="subunit">
    <text evidence="1">F-type ATPases have 2 components, CF(1) - the catalytic core - and CF(0) - the membrane proton channel. CF(1) has five subunits: alpha(3), beta(3), gamma(1), delta(1), epsilon(1). CF(0) has three main subunits: a, b and c.</text>
</comment>
<comment type="subcellular location">
    <subcellularLocation>
        <location evidence="1">Cell membrane</location>
        <topology evidence="1">Peripheral membrane protein</topology>
    </subcellularLocation>
</comment>
<comment type="similarity">
    <text evidence="1">Belongs to the ATPase gamma chain family.</text>
</comment>
<organism>
    <name type="scientific">Bifidobacterium longum subsp. infantis (strain ATCC 15697 / DSM 20088 / JCM 1222 / NCTC 11817 / S12)</name>
    <dbReference type="NCBI Taxonomy" id="391904"/>
    <lineage>
        <taxon>Bacteria</taxon>
        <taxon>Bacillati</taxon>
        <taxon>Actinomycetota</taxon>
        <taxon>Actinomycetes</taxon>
        <taxon>Bifidobacteriales</taxon>
        <taxon>Bifidobacteriaceae</taxon>
        <taxon>Bifidobacterium</taxon>
    </lineage>
</organism>
<feature type="chain" id="PRO_1000148602" description="ATP synthase gamma chain">
    <location>
        <begin position="1"/>
        <end position="307"/>
    </location>
</feature>
<evidence type="ECO:0000255" key="1">
    <source>
        <dbReference type="HAMAP-Rule" id="MF_00815"/>
    </source>
</evidence>
<gene>
    <name evidence="1" type="primary">atpG</name>
    <name type="ordered locus">Blon_0308</name>
    <name type="ordered locus">BLIJ_0313</name>
</gene>
<sequence length="307" mass="33762">MGSQLALKSRIHSTESLAKIFNAQEMIASSHIAKARDVALNAKPYSDAIFDAVQALVAHTHITHPIAVKDENNPRVAVLALTSDRGMAGPYTSSIIRETESLLSRLDAAGKQPELFVYGRRGSTYYKYRNRDIAATWEGNTDQPGVEIAETISDTLMDAYMKPAEKGGVSELYIVYTEFINMVVQKVRVLRMLPVEIVQNETKVPSPDEAAPSTADIAPLYTFEPSLEKVLDAILPKYIQSRIHECLLTAAASETASRQNAMHTATDNARNLIDDLTRKLNASRQASITQELTEIIGSADALTKKEE</sequence>